<name>HEMN_ECOLI</name>
<keyword id="KW-0002">3D-structure</keyword>
<keyword id="KW-0004">4Fe-4S</keyword>
<keyword id="KW-0963">Cytoplasm</keyword>
<keyword id="KW-0903">Direct protein sequencing</keyword>
<keyword id="KW-0408">Iron</keyword>
<keyword id="KW-0411">Iron-sulfur</keyword>
<keyword id="KW-0479">Metal-binding</keyword>
<keyword id="KW-0560">Oxidoreductase</keyword>
<keyword id="KW-0627">Porphyrin biosynthesis</keyword>
<keyword id="KW-1185">Reference proteome</keyword>
<keyword id="KW-0949">S-adenosyl-L-methionine</keyword>
<gene>
    <name type="primary">hemN</name>
    <name type="synonym">yihJ</name>
    <name type="ordered locus">b3867</name>
    <name type="ordered locus">JW3838</name>
</gene>
<dbReference type="EC" id="1.3.98.3" evidence="2"/>
<dbReference type="EMBL" id="D16509">
    <property type="protein sequence ID" value="BAA03961.1"/>
    <property type="molecule type" value="Genomic_DNA"/>
</dbReference>
<dbReference type="EMBL" id="X82073">
    <property type="protein sequence ID" value="CAA57578.1"/>
    <property type="molecule type" value="Genomic_DNA"/>
</dbReference>
<dbReference type="EMBL" id="L19201">
    <property type="protein sequence ID" value="AAB03001.1"/>
    <property type="status" value="ALT_INIT"/>
    <property type="molecule type" value="Genomic_DNA"/>
</dbReference>
<dbReference type="EMBL" id="U00096">
    <property type="protein sequence ID" value="AAC76864.2"/>
    <property type="molecule type" value="Genomic_DNA"/>
</dbReference>
<dbReference type="EMBL" id="AP009048">
    <property type="protein sequence ID" value="BAE77442.1"/>
    <property type="molecule type" value="Genomic_DNA"/>
</dbReference>
<dbReference type="RefSeq" id="NP_418303.2">
    <property type="nucleotide sequence ID" value="NC_000913.3"/>
</dbReference>
<dbReference type="RefSeq" id="WP_000116090.1">
    <property type="nucleotide sequence ID" value="NZ_STEB01000017.1"/>
</dbReference>
<dbReference type="PDB" id="1OLT">
    <property type="method" value="X-ray"/>
    <property type="resolution" value="2.07 A"/>
    <property type="chains" value="A=1-457"/>
</dbReference>
<dbReference type="PDBsum" id="1OLT"/>
<dbReference type="SMR" id="P32131"/>
<dbReference type="BioGRID" id="4262627">
    <property type="interactions" value="21"/>
</dbReference>
<dbReference type="BioGRID" id="852659">
    <property type="interactions" value="2"/>
</dbReference>
<dbReference type="DIP" id="DIP-9887N"/>
<dbReference type="FunCoup" id="P32131">
    <property type="interactions" value="353"/>
</dbReference>
<dbReference type="IntAct" id="P32131">
    <property type="interactions" value="7"/>
</dbReference>
<dbReference type="STRING" id="511145.b3867"/>
<dbReference type="jPOST" id="P32131"/>
<dbReference type="PaxDb" id="511145-b3867"/>
<dbReference type="EnsemblBacteria" id="AAC76864">
    <property type="protein sequence ID" value="AAC76864"/>
    <property type="gene ID" value="b3867"/>
</dbReference>
<dbReference type="GeneID" id="93778070"/>
<dbReference type="GeneID" id="948362"/>
<dbReference type="KEGG" id="ecj:JW3838"/>
<dbReference type="KEGG" id="eco:b3867"/>
<dbReference type="KEGG" id="ecoc:C3026_20900"/>
<dbReference type="PATRIC" id="fig|1411691.4.peg.2845"/>
<dbReference type="EchoBASE" id="EB1782"/>
<dbReference type="eggNOG" id="COG0635">
    <property type="taxonomic scope" value="Bacteria"/>
</dbReference>
<dbReference type="HOGENOM" id="CLU_027579_3_0_6"/>
<dbReference type="InParanoid" id="P32131"/>
<dbReference type="OMA" id="NYAHVPW"/>
<dbReference type="OrthoDB" id="9808022at2"/>
<dbReference type="PhylomeDB" id="P32131"/>
<dbReference type="BioCyc" id="EcoCyc:HEMN-MONOMER"/>
<dbReference type="BioCyc" id="MetaCyc:HEMN-MONOMER"/>
<dbReference type="BRENDA" id="1.3.98.3">
    <property type="organism ID" value="2026"/>
</dbReference>
<dbReference type="UniPathway" id="UPA00251">
    <property type="reaction ID" value="UER00323"/>
</dbReference>
<dbReference type="EvolutionaryTrace" id="P32131"/>
<dbReference type="PRO" id="PR:P32131"/>
<dbReference type="Proteomes" id="UP000000625">
    <property type="component" value="Chromosome"/>
</dbReference>
<dbReference type="GO" id="GO:0005737">
    <property type="term" value="C:cytoplasm"/>
    <property type="evidence" value="ECO:0000314"/>
    <property type="project" value="UniProtKB"/>
</dbReference>
<dbReference type="GO" id="GO:0051539">
    <property type="term" value="F:4 iron, 4 sulfur cluster binding"/>
    <property type="evidence" value="ECO:0000314"/>
    <property type="project" value="EcoCyc"/>
</dbReference>
<dbReference type="GO" id="GO:0051989">
    <property type="term" value="F:coproporphyrinogen dehydrogenase activity"/>
    <property type="evidence" value="ECO:0000314"/>
    <property type="project" value="EcoCyc"/>
</dbReference>
<dbReference type="GO" id="GO:0004109">
    <property type="term" value="F:coproporphyrinogen oxidase activity"/>
    <property type="evidence" value="ECO:0007669"/>
    <property type="project" value="InterPro"/>
</dbReference>
<dbReference type="GO" id="GO:0046872">
    <property type="term" value="F:metal ion binding"/>
    <property type="evidence" value="ECO:0007669"/>
    <property type="project" value="UniProtKB-KW"/>
</dbReference>
<dbReference type="GO" id="GO:0006782">
    <property type="term" value="P:protoporphyrinogen IX biosynthetic process"/>
    <property type="evidence" value="ECO:0000314"/>
    <property type="project" value="UniProtKB"/>
</dbReference>
<dbReference type="GO" id="GO:0019353">
    <property type="term" value="P:protoporphyrinogen IX biosynthetic process from glutamate"/>
    <property type="evidence" value="ECO:0000269"/>
    <property type="project" value="EcoCyc"/>
</dbReference>
<dbReference type="CDD" id="cd01335">
    <property type="entry name" value="Radical_SAM"/>
    <property type="match status" value="1"/>
</dbReference>
<dbReference type="FunFam" id="1.10.10.920:FF:000001">
    <property type="entry name" value="Coproporphyrinogen-III oxidase"/>
    <property type="match status" value="1"/>
</dbReference>
<dbReference type="FunFam" id="3.20.20.70:FF:000077">
    <property type="entry name" value="Coproporphyrinogen-III oxidase"/>
    <property type="match status" value="1"/>
</dbReference>
<dbReference type="Gene3D" id="1.10.10.920">
    <property type="match status" value="1"/>
</dbReference>
<dbReference type="Gene3D" id="3.20.20.70">
    <property type="entry name" value="Aldolase class I"/>
    <property type="match status" value="1"/>
</dbReference>
<dbReference type="InterPro" id="IPR013785">
    <property type="entry name" value="Aldolase_TIM"/>
</dbReference>
<dbReference type="InterPro" id="IPR004558">
    <property type="entry name" value="Coprogen_oxidase_HemN"/>
</dbReference>
<dbReference type="InterPro" id="IPR034505">
    <property type="entry name" value="Coproporphyrinogen-III_oxidase"/>
</dbReference>
<dbReference type="InterPro" id="IPR006638">
    <property type="entry name" value="Elp3/MiaA/NifB-like_rSAM"/>
</dbReference>
<dbReference type="InterPro" id="IPR010723">
    <property type="entry name" value="HemN_C"/>
</dbReference>
<dbReference type="InterPro" id="IPR007197">
    <property type="entry name" value="rSAM"/>
</dbReference>
<dbReference type="NCBIfam" id="TIGR00538">
    <property type="entry name" value="hemN"/>
    <property type="match status" value="1"/>
</dbReference>
<dbReference type="PANTHER" id="PTHR13932">
    <property type="entry name" value="COPROPORPHYRINIGEN III OXIDASE"/>
    <property type="match status" value="1"/>
</dbReference>
<dbReference type="PANTHER" id="PTHR13932:SF6">
    <property type="entry name" value="OXYGEN-INDEPENDENT COPROPORPHYRINOGEN III OXIDASE"/>
    <property type="match status" value="1"/>
</dbReference>
<dbReference type="Pfam" id="PF06969">
    <property type="entry name" value="HemN_C"/>
    <property type="match status" value="1"/>
</dbReference>
<dbReference type="Pfam" id="PF04055">
    <property type="entry name" value="Radical_SAM"/>
    <property type="match status" value="1"/>
</dbReference>
<dbReference type="PIRSF" id="PIRSF000167">
    <property type="entry name" value="HemN"/>
    <property type="match status" value="1"/>
</dbReference>
<dbReference type="SFLD" id="SFLDG01082">
    <property type="entry name" value="B12-binding_domain_containing"/>
    <property type="match status" value="1"/>
</dbReference>
<dbReference type="SFLD" id="SFLDF00277">
    <property type="entry name" value="oxygen-independent_coproporphy"/>
    <property type="match status" value="1"/>
</dbReference>
<dbReference type="SFLD" id="SFLDS00029">
    <property type="entry name" value="Radical_SAM"/>
    <property type="match status" value="1"/>
</dbReference>
<dbReference type="SMART" id="SM00729">
    <property type="entry name" value="Elp3"/>
    <property type="match status" value="1"/>
</dbReference>
<dbReference type="SUPFAM" id="SSF102114">
    <property type="entry name" value="Radical SAM enzymes"/>
    <property type="match status" value="1"/>
</dbReference>
<dbReference type="PROSITE" id="PS51918">
    <property type="entry name" value="RADICAL_SAM"/>
    <property type="match status" value="1"/>
</dbReference>
<protein>
    <recommendedName>
        <fullName>Oxygen-independent coproporphyrinogen III oxidase</fullName>
        <shortName>CPO</shortName>
        <ecNumber evidence="2">1.3.98.3</ecNumber>
    </recommendedName>
    <alternativeName>
        <fullName>Coproporphyrinogen III dehydrogenase</fullName>
        <shortName>CPDH</shortName>
    </alternativeName>
</protein>
<comment type="function">
    <text evidence="2 5">Involved in the heme biosynthesis. Catalyzes the anaerobic oxidative decarboxylation of propionate groups of rings A and B of coproporphyrinogen III to yield the vinyl groups in protoporphyrinogen IX. It can use NAD or NADP, but NAD is preferred.</text>
</comment>
<comment type="catalytic activity">
    <reaction evidence="2">
        <text>coproporphyrinogen III + 2 S-adenosyl-L-methionine = protoporphyrinogen IX + 2 5'-deoxyadenosine + 2 L-methionine + 2 CO2</text>
        <dbReference type="Rhea" id="RHEA:15425"/>
        <dbReference type="ChEBI" id="CHEBI:16526"/>
        <dbReference type="ChEBI" id="CHEBI:17319"/>
        <dbReference type="ChEBI" id="CHEBI:57307"/>
        <dbReference type="ChEBI" id="CHEBI:57309"/>
        <dbReference type="ChEBI" id="CHEBI:57844"/>
        <dbReference type="ChEBI" id="CHEBI:59789"/>
        <dbReference type="EC" id="1.3.98.3"/>
    </reaction>
</comment>
<comment type="cofactor">
    <cofactor evidence="2 3">
        <name>[4Fe-4S] cluster</name>
        <dbReference type="ChEBI" id="CHEBI:49883"/>
    </cofactor>
    <text evidence="2 3">Binds 1 [4Fe-4S] cluster. The cluster is coordinated with 3 cysteines and an exchangeable S-adenosyl-L-methionine.</text>
</comment>
<comment type="activity regulation">
    <text evidence="2">Inhibited by EDTA.</text>
</comment>
<comment type="pathway">
    <text>Porphyrin-containing compound metabolism; protoporphyrin-IX biosynthesis; protoporphyrinogen-IX from coproporphyrinogen-III (AdoMet route): step 1/1.</text>
</comment>
<comment type="subunit">
    <text evidence="2 3">Monomer.</text>
</comment>
<comment type="subcellular location">
    <subcellularLocation>
        <location evidence="2">Cytoplasm</location>
    </subcellularLocation>
</comment>
<comment type="miscellaneous">
    <text evidence="7">The structure carries two S-adenosyl-L-methionine binding sites with only one binding to the iron-sulfur cluster.</text>
</comment>
<comment type="similarity">
    <text evidence="6">Belongs to the anaerobic coproporphyrinogen-III oxidase family.</text>
</comment>
<comment type="sequence caution" evidence="6">
    <conflict type="erroneous initiation">
        <sequence resource="EMBL-CDS" id="AAB03001"/>
    </conflict>
    <text>Extended N-terminus.</text>
</comment>
<sequence length="457" mass="52729">MSVQQIDWDLALIQKYNYSGPRYTSYPTALEFSEDFGEQAFLQAVARYPERPLSLYVHIPFCHKLCYFCGCNKIVTRQQHKADQYLDALEQEIVHRAPLFAGRHVSQLHWGGGTPTYLNKAQISRLMKLLRENFQFNADAEISIEVDPREIELDVLDHLRAEGFNRLSMGVQDFNKEVQRLVNREQDEEFIFALLNHAREIGFTSTNIDLIYGLPKQTPESFAFTLKRVAELNPDRLSVFNYAHLPTIFAAQRKIKDADLPSPQQKLDILQETIAFLTQSGYQFIGMDHFARPDDELAVAQREGVLHRNFQGYTTQGDTDLLGMGVSAISMIGDCYAQNQKELKQYYQQVDEQGNALWRGIALTRDDCIRRDVIKSLICNFRLDYAPIEKQWDLHFADYFAEDLKLLAPLAKDGLVDVDEKGIQVTAKGRLLIRNICMCFDTYLRQKARMQQFSRVI</sequence>
<evidence type="ECO:0000255" key="1">
    <source>
        <dbReference type="PROSITE-ProRule" id="PRU01266"/>
    </source>
</evidence>
<evidence type="ECO:0000269" key="2">
    <source>
    </source>
</evidence>
<evidence type="ECO:0000269" key="3">
    <source>
    </source>
</evidence>
<evidence type="ECO:0000269" key="4">
    <source>
    </source>
</evidence>
<evidence type="ECO:0000269" key="5">
    <source>
    </source>
</evidence>
<evidence type="ECO:0000305" key="6"/>
<evidence type="ECO:0000305" key="7">
    <source>
    </source>
</evidence>
<evidence type="ECO:0007744" key="8">
    <source>
        <dbReference type="PDB" id="1OLT"/>
    </source>
</evidence>
<evidence type="ECO:0007829" key="9">
    <source>
        <dbReference type="PDB" id="1OLT"/>
    </source>
</evidence>
<proteinExistence type="evidence at protein level"/>
<organism>
    <name type="scientific">Escherichia coli (strain K12)</name>
    <dbReference type="NCBI Taxonomy" id="83333"/>
    <lineage>
        <taxon>Bacteria</taxon>
        <taxon>Pseudomonadati</taxon>
        <taxon>Pseudomonadota</taxon>
        <taxon>Gammaproteobacteria</taxon>
        <taxon>Enterobacterales</taxon>
        <taxon>Enterobacteriaceae</taxon>
        <taxon>Escherichia</taxon>
    </lineage>
</organism>
<feature type="chain" id="PRO_0000109941" description="Oxygen-independent coproporphyrinogen III oxidase">
    <location>
        <begin position="1"/>
        <end position="457"/>
    </location>
</feature>
<feature type="domain" description="Radical SAM core" evidence="1">
    <location>
        <begin position="47"/>
        <end position="280"/>
    </location>
</feature>
<feature type="binding site" evidence="3 8">
    <location>
        <position position="56"/>
    </location>
    <ligand>
        <name>S-adenosyl-L-methionine</name>
        <dbReference type="ChEBI" id="CHEBI:59789"/>
        <label>1</label>
    </ligand>
</feature>
<feature type="binding site" evidence="3 8">
    <location>
        <position position="62"/>
    </location>
    <ligand>
        <name>[4Fe-4S] cluster</name>
        <dbReference type="ChEBI" id="CHEBI:49883"/>
        <note>4Fe-4S-S-AdoMet</note>
    </ligand>
</feature>
<feature type="binding site" evidence="3 8">
    <location>
        <position position="66"/>
    </location>
    <ligand>
        <name>[4Fe-4S] cluster</name>
        <dbReference type="ChEBI" id="CHEBI:49883"/>
        <note>4Fe-4S-S-AdoMet</note>
    </ligand>
</feature>
<feature type="binding site" evidence="3 8">
    <location>
        <begin position="68"/>
        <end position="70"/>
    </location>
    <ligand>
        <name>S-adenosyl-L-methionine</name>
        <dbReference type="ChEBI" id="CHEBI:59789"/>
        <label>2</label>
    </ligand>
</feature>
<feature type="binding site" evidence="3 8">
    <location>
        <position position="69"/>
    </location>
    <ligand>
        <name>[4Fe-4S] cluster</name>
        <dbReference type="ChEBI" id="CHEBI:49883"/>
        <note>4Fe-4S-S-AdoMet</note>
    </ligand>
</feature>
<feature type="binding site" evidence="3 8">
    <location>
        <position position="112"/>
    </location>
    <ligand>
        <name>S-adenosyl-L-methionine</name>
        <dbReference type="ChEBI" id="CHEBI:59789"/>
        <label>1</label>
    </ligand>
</feature>
<feature type="binding site" evidence="3 8">
    <location>
        <begin position="113"/>
        <end position="114"/>
    </location>
    <ligand>
        <name>S-adenosyl-L-methionine</name>
        <dbReference type="ChEBI" id="CHEBI:59789"/>
        <label>2</label>
    </ligand>
</feature>
<feature type="binding site" evidence="3 8">
    <location>
        <position position="145"/>
    </location>
    <ligand>
        <name>S-adenosyl-L-methionine</name>
        <dbReference type="ChEBI" id="CHEBI:59789"/>
        <label>1</label>
    </ligand>
</feature>
<feature type="binding site" evidence="3 8">
    <location>
        <position position="172"/>
    </location>
    <ligand>
        <name>S-adenosyl-L-methionine</name>
        <dbReference type="ChEBI" id="CHEBI:59789"/>
        <label>2</label>
    </ligand>
</feature>
<feature type="binding site" evidence="3 8">
    <location>
        <position position="184"/>
    </location>
    <ligand>
        <name>S-adenosyl-L-methionine</name>
        <dbReference type="ChEBI" id="CHEBI:59789"/>
        <label>2</label>
    </ligand>
</feature>
<feature type="binding site" evidence="3 8">
    <location>
        <position position="209"/>
    </location>
    <ligand>
        <name>S-adenosyl-L-methionine</name>
        <dbReference type="ChEBI" id="CHEBI:59789"/>
        <label>2</label>
    </ligand>
</feature>
<feature type="binding site" evidence="3 8">
    <location>
        <position position="243"/>
    </location>
    <ligand>
        <name>S-adenosyl-L-methionine</name>
        <dbReference type="ChEBI" id="CHEBI:59789"/>
        <label>2</label>
    </ligand>
</feature>
<feature type="binding site" evidence="3 8">
    <location>
        <position position="329"/>
    </location>
    <ligand>
        <name>S-adenosyl-L-methionine</name>
        <dbReference type="ChEBI" id="CHEBI:59789"/>
        <label>1</label>
    </ligand>
</feature>
<feature type="mutagenesis site" description="Loss of activity." evidence="2 4">
    <original>Y</original>
    <variation>A</variation>
    <variation>L</variation>
    <location>
        <position position="56"/>
    </location>
</feature>
<feature type="mutagenesis site" description="Decreases activity by 50%." evidence="2 4">
    <original>Y</original>
    <variation>F</variation>
    <location>
        <position position="56"/>
    </location>
</feature>
<feature type="mutagenesis site" description="Results in loss of iron-sulfur cluster and activity." evidence="2">
    <original>H</original>
    <variation>L</variation>
    <location>
        <position position="58"/>
    </location>
</feature>
<feature type="mutagenesis site" description="Results in loss of iron-sulfur cluster and activity." evidence="2">
    <original>C</original>
    <variation>S</variation>
    <location>
        <position position="62"/>
    </location>
</feature>
<feature type="mutagenesis site" description="Results in loss of iron-sulfur cluster and activity." evidence="2">
    <original>C</original>
    <variation>S</variation>
    <location>
        <position position="66"/>
    </location>
</feature>
<feature type="mutagenesis site" description="No effect." evidence="2">
    <original>F</original>
    <variation>L</variation>
    <location>
        <position position="68"/>
    </location>
</feature>
<feature type="mutagenesis site" description="Results in loss of iron-sulfur cluster and activity." evidence="2">
    <original>C</original>
    <variation>S</variation>
    <location>
        <position position="69"/>
    </location>
</feature>
<feature type="mutagenesis site" description="No effect on iron-sulfur cluster, but results in activity loss." evidence="2">
    <original>C</original>
    <variation>S</variation>
    <location>
        <position position="71"/>
    </location>
</feature>
<feature type="mutagenesis site" description="Loss of activity and much less iron-sulfur cluster formed; when associated with V-113." evidence="2">
    <original>G</original>
    <variation>V</variation>
    <location>
        <position position="111"/>
    </location>
</feature>
<feature type="mutagenesis site" description="Loss of activity and much less iron-sulfur cluster formed; when associated with V-111." evidence="2">
    <original>G</original>
    <variation>V</variation>
    <location>
        <position position="113"/>
    </location>
</feature>
<feature type="mutagenesis site" description="Loss of activity. Iron content reduced by about 80%." evidence="4">
    <original>E</original>
    <variation>A</variation>
    <variation>I</variation>
    <location>
        <position position="145"/>
    </location>
</feature>
<feature type="mutagenesis site" description="Loss of activity. Iron content reduced by about 50%. Can cleave up to one molecule of S-adenosyl-L-methionine (in vitro)." evidence="4">
    <original>F</original>
    <variation>A</variation>
    <variation>L</variation>
    <location>
        <position position="310"/>
    </location>
</feature>
<feature type="mutagenesis site" description="Loss of activity. No change in iron content. Can cleave up to one molecule of S-adenosyl-L-methionine (in vitro)." evidence="4">
    <original>Q</original>
    <variation>A</variation>
    <location>
        <position position="311"/>
    </location>
</feature>
<feature type="mutagenesis site" description="Loss of activity. No change in iron content. Can cleave up to one molecule of S-adenosyl-L-methionine (in vitro)." evidence="4">
    <original>I</original>
    <variation>A</variation>
    <location>
        <position position="329"/>
    </location>
</feature>
<feature type="sequence conflict" description="In Ref. 2; CAA57578." evidence="6" ref="2">
    <original>L</original>
    <variation>V</variation>
    <location>
        <position position="232"/>
    </location>
</feature>
<feature type="turn" evidence="9">
    <location>
        <begin position="10"/>
        <end position="12"/>
    </location>
</feature>
<feature type="strand" evidence="9">
    <location>
        <begin position="25"/>
        <end position="27"/>
    </location>
</feature>
<feature type="helix" evidence="9">
    <location>
        <begin position="29"/>
        <end position="31"/>
    </location>
</feature>
<feature type="helix" evidence="9">
    <location>
        <begin position="38"/>
        <end position="45"/>
    </location>
</feature>
<feature type="strand" evidence="9">
    <location>
        <begin position="53"/>
        <end position="59"/>
    </location>
</feature>
<feature type="strand" evidence="9">
    <location>
        <begin position="61"/>
        <end position="64"/>
    </location>
</feature>
<feature type="helix" evidence="9">
    <location>
        <begin position="80"/>
        <end position="96"/>
    </location>
</feature>
<feature type="helix" evidence="9">
    <location>
        <begin position="97"/>
        <end position="100"/>
    </location>
</feature>
<feature type="strand" evidence="9">
    <location>
        <begin position="105"/>
        <end position="113"/>
    </location>
</feature>
<feature type="helix" evidence="9">
    <location>
        <begin position="115"/>
        <end position="117"/>
    </location>
</feature>
<feature type="helix" evidence="9">
    <location>
        <begin position="120"/>
        <end position="133"/>
    </location>
</feature>
<feature type="strand" evidence="9">
    <location>
        <begin position="136"/>
        <end position="146"/>
    </location>
</feature>
<feature type="strand" evidence="9">
    <location>
        <begin position="148"/>
        <end position="150"/>
    </location>
</feature>
<feature type="helix" evidence="9">
    <location>
        <begin position="154"/>
        <end position="161"/>
    </location>
</feature>
<feature type="strand" evidence="9">
    <location>
        <begin position="166"/>
        <end position="172"/>
    </location>
</feature>
<feature type="helix" evidence="9">
    <location>
        <begin position="176"/>
        <end position="182"/>
    </location>
</feature>
<feature type="helix" evidence="9">
    <location>
        <begin position="188"/>
        <end position="200"/>
    </location>
</feature>
<feature type="strand" evidence="9">
    <location>
        <begin position="207"/>
        <end position="213"/>
    </location>
</feature>
<feature type="helix" evidence="9">
    <location>
        <begin position="219"/>
        <end position="232"/>
    </location>
</feature>
<feature type="strand" evidence="9">
    <location>
        <begin position="235"/>
        <end position="241"/>
    </location>
</feature>
<feature type="turn" evidence="9">
    <location>
        <begin position="246"/>
        <end position="248"/>
    </location>
</feature>
<feature type="helix" evidence="9">
    <location>
        <begin position="250"/>
        <end position="254"/>
    </location>
</feature>
<feature type="helix" evidence="9">
    <location>
        <begin position="257"/>
        <end position="259"/>
    </location>
</feature>
<feature type="helix" evidence="9">
    <location>
        <begin position="263"/>
        <end position="279"/>
    </location>
</feature>
<feature type="strand" evidence="9">
    <location>
        <begin position="283"/>
        <end position="286"/>
    </location>
</feature>
<feature type="strand" evidence="9">
    <location>
        <begin position="289"/>
        <end position="291"/>
    </location>
</feature>
<feature type="helix" evidence="9">
    <location>
        <begin position="296"/>
        <end position="303"/>
    </location>
</feature>
<feature type="strand" evidence="9">
    <location>
        <begin position="313"/>
        <end position="315"/>
    </location>
</feature>
<feature type="strand" evidence="9">
    <location>
        <begin position="320"/>
        <end position="325"/>
    </location>
</feature>
<feature type="strand" evidence="9">
    <location>
        <begin position="329"/>
        <end position="332"/>
    </location>
</feature>
<feature type="strand" evidence="9">
    <location>
        <begin position="335"/>
        <end position="339"/>
    </location>
</feature>
<feature type="helix" evidence="9">
    <location>
        <begin position="343"/>
        <end position="353"/>
    </location>
</feature>
<feature type="strand" evidence="9">
    <location>
        <begin position="357"/>
        <end position="362"/>
    </location>
</feature>
<feature type="helix" evidence="9">
    <location>
        <begin position="365"/>
        <end position="380"/>
    </location>
</feature>
<feature type="strand" evidence="9">
    <location>
        <begin position="381"/>
        <end position="384"/>
    </location>
</feature>
<feature type="helix" evidence="9">
    <location>
        <begin position="385"/>
        <end position="391"/>
    </location>
</feature>
<feature type="helix" evidence="9">
    <location>
        <begin position="396"/>
        <end position="399"/>
    </location>
</feature>
<feature type="helix" evidence="9">
    <location>
        <begin position="401"/>
        <end position="412"/>
    </location>
</feature>
<feature type="strand" evidence="9">
    <location>
        <begin position="415"/>
        <end position="418"/>
    </location>
</feature>
<feature type="strand" evidence="9">
    <location>
        <begin position="420"/>
        <end position="425"/>
    </location>
</feature>
<feature type="turn" evidence="9">
    <location>
        <begin position="427"/>
        <end position="429"/>
    </location>
</feature>
<feature type="helix" evidence="9">
    <location>
        <begin position="430"/>
        <end position="432"/>
    </location>
</feature>
<feature type="helix" evidence="9">
    <location>
        <begin position="433"/>
        <end position="438"/>
    </location>
</feature>
<accession>P32131</accession>
<accession>P76772</accession>
<accession>Q2M8G4</accession>
<reference key="1">
    <citation type="submission" date="1993-06" db="EMBL/GenBank/DDBJ databases">
        <title>Sequence of the downstream flanking region of the glnALG genes of Escherichia coli.</title>
        <authorList>
            <person name="Wachi M."/>
            <person name="Hamano-Takaku F."/>
            <person name="Nagano K."/>
            <person name="Kobayashi M."/>
            <person name="Yukawa H."/>
            <person name="Nagai K."/>
        </authorList>
    </citation>
    <scope>NUCLEOTIDE SEQUENCE [GENOMIC DNA]</scope>
    <source>
        <strain>K12</strain>
    </source>
</reference>
<reference key="2">
    <citation type="journal article" date="1995" name="J. Bacteriol.">
        <title>Cloning and characterization of the Escherichia coli hemN gene encoding the oxygen-independent coproporphyrinogen III oxidase.</title>
        <authorList>
            <person name="Troup B."/>
            <person name="Hungerer C."/>
            <person name="Jahn D."/>
        </authorList>
    </citation>
    <scope>NUCLEOTIDE SEQUENCE [GENOMIC DNA]</scope>
    <scope>FUNCTION</scope>
    <source>
        <strain>K12</strain>
    </source>
</reference>
<reference key="3">
    <citation type="journal article" date="1993" name="Nucleic Acids Res.">
        <title>Analysis of the Escherichia coli genome. III. DNA sequence of the region from 87.2 to 89.2 minutes.</title>
        <authorList>
            <person name="Plunkett G. III"/>
            <person name="Burland V."/>
            <person name="Daniels D.L."/>
            <person name="Blattner F.R."/>
        </authorList>
    </citation>
    <scope>NUCLEOTIDE SEQUENCE [LARGE SCALE GENOMIC DNA]</scope>
    <source>
        <strain>K12 / MG1655 / ATCC 47076</strain>
    </source>
</reference>
<reference key="4">
    <citation type="journal article" date="1997" name="Science">
        <title>The complete genome sequence of Escherichia coli K-12.</title>
        <authorList>
            <person name="Blattner F.R."/>
            <person name="Plunkett G. III"/>
            <person name="Bloch C.A."/>
            <person name="Perna N.T."/>
            <person name="Burland V."/>
            <person name="Riley M."/>
            <person name="Collado-Vides J."/>
            <person name="Glasner J.D."/>
            <person name="Rode C.K."/>
            <person name="Mayhew G.F."/>
            <person name="Gregor J."/>
            <person name="Davis N.W."/>
            <person name="Kirkpatrick H.A."/>
            <person name="Goeden M.A."/>
            <person name="Rose D.J."/>
            <person name="Mau B."/>
            <person name="Shao Y."/>
        </authorList>
    </citation>
    <scope>NUCLEOTIDE SEQUENCE [LARGE SCALE GENOMIC DNA]</scope>
    <source>
        <strain>K12 / MG1655 / ATCC 47076</strain>
    </source>
</reference>
<reference key="5">
    <citation type="journal article" date="2006" name="Mol. Syst. Biol.">
        <title>Highly accurate genome sequences of Escherichia coli K-12 strains MG1655 and W3110.</title>
        <authorList>
            <person name="Hayashi K."/>
            <person name="Morooka N."/>
            <person name="Yamamoto Y."/>
            <person name="Fujita K."/>
            <person name="Isono K."/>
            <person name="Choi S."/>
            <person name="Ohtsubo E."/>
            <person name="Baba T."/>
            <person name="Wanner B.L."/>
            <person name="Mori H."/>
            <person name="Horiuchi T."/>
        </authorList>
    </citation>
    <scope>NUCLEOTIDE SEQUENCE [LARGE SCALE GENOMIC DNA]</scope>
    <source>
        <strain>K12 / W3110 / ATCC 27325 / DSM 5911</strain>
    </source>
</reference>
<reference key="6">
    <citation type="journal article" date="2002" name="J. Biol. Chem.">
        <title>Oxygen-independent coproporphyrinogen-III oxidase HemN from Escherichia coli.</title>
        <authorList>
            <person name="Layer G."/>
            <person name="Verfuerth K."/>
            <person name="Mahlitz E."/>
            <person name="Jahn D."/>
        </authorList>
    </citation>
    <scope>PROTEIN SEQUENCE OF 1-4</scope>
    <scope>FUNCTION</scope>
    <scope>CATALYTIC ACTIVITY</scope>
    <scope>MUTAGENESIS OF TYR-56; HIS-58; CYS-62; CYS-66; PHE-68; CYS-69; CYS-71; GLY-111 AND GLY-113</scope>
    <scope>SUBSTRATE SPECIFICITY</scope>
    <scope>SUBCELLULAR LOCATION</scope>
    <scope>COFACTOR</scope>
    <scope>ACTIVITY REGULATION</scope>
    <scope>REACTION MECHANISM</scope>
    <scope>SUBUNIT</scope>
</reference>
<reference key="7">
    <citation type="journal article" date="2005" name="J. Biol. Chem.">
        <title>Radical S-adenosylmethionine enzyme coproporphyrinogen III oxidase HemN: functional features of the [4Fe-4S] cluster and the two bound S-adenosyl-L-methionines.</title>
        <authorList>
            <person name="Layer G."/>
            <person name="Grage K."/>
            <person name="Teschner T."/>
            <person name="Schuenemann V."/>
            <person name="Breckau D."/>
            <person name="Masoumi A."/>
            <person name="Jahn M."/>
            <person name="Heathcote P."/>
            <person name="Trautwein A.X."/>
            <person name="Jahn D."/>
        </authorList>
    </citation>
    <scope>MUTAGENESIS OF TYR-56; GLU-145; PHE-310; GLN-311 AND ILE-329</scope>
</reference>
<reference key="8">
    <citation type="journal article" date="2006" name="J. Biol. Chem.">
        <title>The substrate radical of Escherichia coli oxygen-independent coproporphyrinogen III oxidase HemN.</title>
        <authorList>
            <person name="Layer G."/>
            <person name="Pierik A.J."/>
            <person name="Trost M."/>
            <person name="Rigby S.E."/>
            <person name="Leech H.K."/>
            <person name="Grage K."/>
            <person name="Breckau D."/>
            <person name="Astner I."/>
            <person name="Jansch L."/>
            <person name="Heathcote P."/>
            <person name="Warren M.J."/>
            <person name="Heinz D.W."/>
            <person name="Jahn D."/>
        </authorList>
    </citation>
    <scope>REACTION MECHANISM</scope>
</reference>
<reference key="9">
    <citation type="journal article" date="2003" name="EMBO J.">
        <title>Crystal structure of coproporphyrinogen III oxidase reveals cofactor geometry of Radical SAM enzymes.</title>
        <authorList>
            <person name="Layer G."/>
            <person name="Moser J."/>
            <person name="Heinz D.W."/>
            <person name="Jahn D."/>
            <person name="Schubert W.-D."/>
        </authorList>
    </citation>
    <scope>X-RAY CRYSTALLOGRAPHY (2.07 ANGSTROMS) IN COMPLEX WITH 4FE-4S AND S-ADENOSYL-L-METHIONINE</scope>
    <scope>CATALYTIC MECHANISM</scope>
    <scope>COFACTOR</scope>
    <scope>SUBUNIT</scope>
</reference>